<organism>
    <name type="scientific">Bacillus subtilis (strain 168)</name>
    <dbReference type="NCBI Taxonomy" id="224308"/>
    <lineage>
        <taxon>Bacteria</taxon>
        <taxon>Bacillati</taxon>
        <taxon>Bacillota</taxon>
        <taxon>Bacilli</taxon>
        <taxon>Bacillales</taxon>
        <taxon>Bacillaceae</taxon>
        <taxon>Bacillus</taxon>
    </lineage>
</organism>
<gene>
    <name type="primary">ssbB</name>
    <name type="synonym">ywpH</name>
    <name type="ordered locus">BSU36310</name>
</gene>
<accession>C0SPB6</accession>
<accession>P94590</accession>
<accession>Q795B0</accession>
<evidence type="ECO:0000250" key="1"/>
<evidence type="ECO:0000255" key="2">
    <source>
        <dbReference type="HAMAP-Rule" id="MF_00984"/>
    </source>
</evidence>
<evidence type="ECO:0000269" key="3">
    <source>
    </source>
</evidence>
<evidence type="ECO:0000269" key="4">
    <source>
    </source>
</evidence>
<evidence type="ECO:0000269" key="5">
    <source>
    </source>
</evidence>
<evidence type="ECO:0000269" key="6">
    <source>
    </source>
</evidence>
<evidence type="ECO:0000269" key="7">
    <source>
    </source>
</evidence>
<evidence type="ECO:0000269" key="8">
    <source>
    </source>
</evidence>
<evidence type="ECO:0000269" key="9">
    <source>
    </source>
</evidence>
<evidence type="ECO:0000305" key="10"/>
<evidence type="ECO:0000305" key="11">
    <source>
    </source>
</evidence>
<evidence type="ECO:0007829" key="12">
    <source>
        <dbReference type="PDB" id="3VDY"/>
    </source>
</evidence>
<sequence length="113" mass="12520">MFNQVMLVGRLTKDPDLRYTSAGAAVAHVTLAVNRSFKNASGEIEADYVNCTLWRKTAENTALYCQKGSLVGVSGRIQTRSYENEEGVNVYVTEVLADTVRFMDPKPREKAAD</sequence>
<proteinExistence type="evidence at protein level"/>
<name>SSBB_BACSU</name>
<comment type="function">
    <text evidence="5 9">Not essential for replication of the chromosome, but is required for optimal competence (PubMed:14762004). Binds ssDNA, binding is facilitated by DprA, acts as an accessory factor for homologous DNA strand exchange (PubMed:25138221).</text>
</comment>
<comment type="subunit">
    <text evidence="2 7">Homotetramer (PubMed:16549871).</text>
</comment>
<comment type="subcellular location">
    <subcellularLocation>
        <location evidence="6 8">Cytoplasm</location>
    </subcellularLocation>
    <text evidence="6 8">Localizes mostly to the cell poles during the development of competence (PubMed:16009133, PubMed:17630974). Colocalizes with ComGA (PubMed:16009133). During competence a number of proteins (at least CoiA, ComFA, ComGA, DprA, RecA and SsbB) are thought to colocalize at the cell pole (PubMed:17630974). During development of competence ComGA and SsbB colocalize in discrete foci which accumulate at the cell poles and then delocalize without the overall levels of proteins decreasing, these processes are coincident with the timing of transformability and the site of DNA uptake (PubMed:16009133).</text>
</comment>
<comment type="developmental stage">
    <text evidence="3 6 8">Preferentially expressed in cells competent for DNA transformation; that is 5-15% of the population (PubMed:11918817, PubMed:16009133, PubMed:17630974).</text>
</comment>
<comment type="induction">
    <text evidence="3 4 5">Only expressed during growth in minimal medium, strongly induced when cells enter stationary phase with highest levels reached about 2 hours after transition to stationary phase (PubMed:14762004). Expression activated by ComK (PubMed:11918817, PubMed:11948146, PubMed:14762004).</text>
</comment>
<comment type="PTM">
    <text evidence="7">Phosphorylated by YwqD, which increases ssDNA affinity; dephosphorylated by YwqE.</text>
</comment>
<comment type="disruption phenotype">
    <text evidence="3 4 5 8">Transformation efficiency drops 10- to 50-fold (PubMed:11918817, PubMed:11948146, PubMed:14762004). Destabilization of DprA (PubMed:17630974).</text>
</comment>
<comment type="caution">
    <text evidence="11">Lacks the C-terminal region present in SsbA and thus is probably not able to participate in DNA replication and/or DNA repair.</text>
</comment>
<dbReference type="EMBL" id="Z83337">
    <property type="protein sequence ID" value="CAB05949.1"/>
    <property type="molecule type" value="Genomic_DNA"/>
</dbReference>
<dbReference type="EMBL" id="AL009126">
    <property type="protein sequence ID" value="CAB15648.2"/>
    <property type="molecule type" value="Genomic_DNA"/>
</dbReference>
<dbReference type="PIR" id="B70066">
    <property type="entry name" value="B70066"/>
</dbReference>
<dbReference type="RefSeq" id="NP_391512.2">
    <property type="nucleotide sequence ID" value="NC_000964.3"/>
</dbReference>
<dbReference type="RefSeq" id="WP_003227798.1">
    <property type="nucleotide sequence ID" value="NZ_OZ025638.1"/>
</dbReference>
<dbReference type="PDB" id="3VDY">
    <property type="method" value="X-ray"/>
    <property type="resolution" value="2.80 A"/>
    <property type="chains" value="A/B=1-113"/>
</dbReference>
<dbReference type="PDBsum" id="3VDY"/>
<dbReference type="SMR" id="C0SPB6"/>
<dbReference type="FunCoup" id="C0SPB6">
    <property type="interactions" value="528"/>
</dbReference>
<dbReference type="STRING" id="224308.BSU36310"/>
<dbReference type="PaxDb" id="224308-BSU36310"/>
<dbReference type="EnsemblBacteria" id="CAB15648">
    <property type="protein sequence ID" value="CAB15648"/>
    <property type="gene ID" value="BSU_36310"/>
</dbReference>
<dbReference type="GeneID" id="936910"/>
<dbReference type="KEGG" id="bsu:BSU36310"/>
<dbReference type="PATRIC" id="fig|224308.179.peg.3930"/>
<dbReference type="eggNOG" id="COG0629">
    <property type="taxonomic scope" value="Bacteria"/>
</dbReference>
<dbReference type="InParanoid" id="C0SPB6"/>
<dbReference type="OrthoDB" id="9809878at2"/>
<dbReference type="PhylomeDB" id="C0SPB6"/>
<dbReference type="BioCyc" id="BSUB:BSU36310-MONOMER"/>
<dbReference type="EvolutionaryTrace" id="C0SPB6"/>
<dbReference type="Proteomes" id="UP000001570">
    <property type="component" value="Chromosome"/>
</dbReference>
<dbReference type="GO" id="GO:0005737">
    <property type="term" value="C:cytoplasm"/>
    <property type="evidence" value="ECO:0007669"/>
    <property type="project" value="UniProtKB-SubCell"/>
</dbReference>
<dbReference type="GO" id="GO:0009295">
    <property type="term" value="C:nucleoid"/>
    <property type="evidence" value="ECO:0000318"/>
    <property type="project" value="GO_Central"/>
</dbReference>
<dbReference type="GO" id="GO:0008047">
    <property type="term" value="F:enzyme activator activity"/>
    <property type="evidence" value="ECO:0000318"/>
    <property type="project" value="GO_Central"/>
</dbReference>
<dbReference type="GO" id="GO:0003697">
    <property type="term" value="F:single-stranded DNA binding"/>
    <property type="evidence" value="ECO:0000318"/>
    <property type="project" value="GO_Central"/>
</dbReference>
<dbReference type="GO" id="GO:0006310">
    <property type="term" value="P:DNA recombination"/>
    <property type="evidence" value="ECO:0007669"/>
    <property type="project" value="UniProtKB-KW"/>
</dbReference>
<dbReference type="GO" id="GO:0006260">
    <property type="term" value="P:DNA replication"/>
    <property type="evidence" value="ECO:0000318"/>
    <property type="project" value="GO_Central"/>
</dbReference>
<dbReference type="GO" id="GO:0030420">
    <property type="term" value="P:establishment of competence for transformation"/>
    <property type="evidence" value="ECO:0007669"/>
    <property type="project" value="UniProtKB-KW"/>
</dbReference>
<dbReference type="CDD" id="cd04496">
    <property type="entry name" value="SSB_OBF"/>
    <property type="match status" value="1"/>
</dbReference>
<dbReference type="FunFam" id="2.40.50.140:FF:000084">
    <property type="entry name" value="Single-stranded DNA-binding protein"/>
    <property type="match status" value="1"/>
</dbReference>
<dbReference type="Gene3D" id="2.40.50.140">
    <property type="entry name" value="Nucleic acid-binding proteins"/>
    <property type="match status" value="1"/>
</dbReference>
<dbReference type="HAMAP" id="MF_00984">
    <property type="entry name" value="SSB"/>
    <property type="match status" value="1"/>
</dbReference>
<dbReference type="InterPro" id="IPR012340">
    <property type="entry name" value="NA-bd_OB-fold"/>
</dbReference>
<dbReference type="InterPro" id="IPR000424">
    <property type="entry name" value="Primosome_PriB/ssb"/>
</dbReference>
<dbReference type="InterPro" id="IPR011344">
    <property type="entry name" value="ssDNA-bd"/>
</dbReference>
<dbReference type="NCBIfam" id="TIGR00621">
    <property type="entry name" value="ssb"/>
    <property type="match status" value="1"/>
</dbReference>
<dbReference type="PANTHER" id="PTHR10302">
    <property type="entry name" value="SINGLE-STRANDED DNA-BINDING PROTEIN"/>
    <property type="match status" value="1"/>
</dbReference>
<dbReference type="PANTHER" id="PTHR10302:SF27">
    <property type="entry name" value="SINGLE-STRANDED DNA-BINDING PROTEIN"/>
    <property type="match status" value="1"/>
</dbReference>
<dbReference type="Pfam" id="PF00436">
    <property type="entry name" value="SSB"/>
    <property type="match status" value="1"/>
</dbReference>
<dbReference type="PIRSF" id="PIRSF002070">
    <property type="entry name" value="SSB"/>
    <property type="match status" value="1"/>
</dbReference>
<dbReference type="SUPFAM" id="SSF50249">
    <property type="entry name" value="Nucleic acid-binding proteins"/>
    <property type="match status" value="1"/>
</dbReference>
<dbReference type="PROSITE" id="PS50935">
    <property type="entry name" value="SSB"/>
    <property type="match status" value="1"/>
</dbReference>
<feature type="chain" id="PRO_0000389261" description="Single-stranded DNA-binding protein B">
    <location>
        <begin position="1"/>
        <end position="113"/>
    </location>
</feature>
<feature type="domain" description="SSB" evidence="2">
    <location>
        <begin position="1"/>
        <end position="104"/>
    </location>
</feature>
<feature type="modified residue" description="Phosphotyrosine" evidence="1">
    <location>
        <position position="82"/>
    </location>
</feature>
<feature type="sequence conflict" description="In Ref. 1; CAB05949." evidence="10" ref="1">
    <original>T</original>
    <variation>A</variation>
    <location>
        <position position="79"/>
    </location>
</feature>
<feature type="strand" evidence="12">
    <location>
        <begin position="5"/>
        <end position="13"/>
    </location>
</feature>
<feature type="strand" evidence="12">
    <location>
        <begin position="16"/>
        <end position="19"/>
    </location>
</feature>
<feature type="strand" evidence="12">
    <location>
        <begin position="25"/>
        <end position="34"/>
    </location>
</feature>
<feature type="strand" evidence="12">
    <location>
        <begin position="40"/>
        <end position="42"/>
    </location>
</feature>
<feature type="strand" evidence="12">
    <location>
        <begin position="46"/>
        <end position="54"/>
    </location>
</feature>
<feature type="helix" evidence="12">
    <location>
        <begin position="55"/>
        <end position="64"/>
    </location>
</feature>
<feature type="strand" evidence="12">
    <location>
        <begin position="70"/>
        <end position="82"/>
    </location>
</feature>
<feature type="strand" evidence="12">
    <location>
        <begin position="90"/>
        <end position="102"/>
    </location>
</feature>
<keyword id="KW-0002">3D-structure</keyword>
<keyword id="KW-0178">Competence</keyword>
<keyword id="KW-0963">Cytoplasm</keyword>
<keyword id="KW-0233">DNA recombination</keyword>
<keyword id="KW-0238">DNA-binding</keyword>
<keyword id="KW-0597">Phosphoprotein</keyword>
<keyword id="KW-1185">Reference proteome</keyword>
<reference key="1">
    <citation type="journal article" date="1997" name="Microbiology">
        <title>The Bacillus subtilis genome from gerBC (311 degrees) to licR (334 degrees).</title>
        <authorList>
            <person name="Presecan E."/>
            <person name="Moszer I."/>
            <person name="Boursier L."/>
            <person name="Cruz Ramos H."/>
            <person name="De La Fuente V."/>
            <person name="Hullo M.-F."/>
            <person name="Lelong C."/>
            <person name="Schleich S."/>
            <person name="Sekowska A."/>
            <person name="Song B.H."/>
            <person name="Villani G."/>
            <person name="Kunst F."/>
            <person name="Danchin A."/>
            <person name="Glaser P."/>
        </authorList>
    </citation>
    <scope>NUCLEOTIDE SEQUENCE [GENOMIC DNA]</scope>
    <source>
        <strain>168</strain>
    </source>
</reference>
<reference key="2">
    <citation type="journal article" date="1997" name="Nature">
        <title>The complete genome sequence of the Gram-positive bacterium Bacillus subtilis.</title>
        <authorList>
            <person name="Kunst F."/>
            <person name="Ogasawara N."/>
            <person name="Moszer I."/>
            <person name="Albertini A.M."/>
            <person name="Alloni G."/>
            <person name="Azevedo V."/>
            <person name="Bertero M.G."/>
            <person name="Bessieres P."/>
            <person name="Bolotin A."/>
            <person name="Borchert S."/>
            <person name="Borriss R."/>
            <person name="Boursier L."/>
            <person name="Brans A."/>
            <person name="Braun M."/>
            <person name="Brignell S.C."/>
            <person name="Bron S."/>
            <person name="Brouillet S."/>
            <person name="Bruschi C.V."/>
            <person name="Caldwell B."/>
            <person name="Capuano V."/>
            <person name="Carter N.M."/>
            <person name="Choi S.-K."/>
            <person name="Codani J.-J."/>
            <person name="Connerton I.F."/>
            <person name="Cummings N.J."/>
            <person name="Daniel R.A."/>
            <person name="Denizot F."/>
            <person name="Devine K.M."/>
            <person name="Duesterhoeft A."/>
            <person name="Ehrlich S.D."/>
            <person name="Emmerson P.T."/>
            <person name="Entian K.-D."/>
            <person name="Errington J."/>
            <person name="Fabret C."/>
            <person name="Ferrari E."/>
            <person name="Foulger D."/>
            <person name="Fritz C."/>
            <person name="Fujita M."/>
            <person name="Fujita Y."/>
            <person name="Fuma S."/>
            <person name="Galizzi A."/>
            <person name="Galleron N."/>
            <person name="Ghim S.-Y."/>
            <person name="Glaser P."/>
            <person name="Goffeau A."/>
            <person name="Golightly E.J."/>
            <person name="Grandi G."/>
            <person name="Guiseppi G."/>
            <person name="Guy B.J."/>
            <person name="Haga K."/>
            <person name="Haiech J."/>
            <person name="Harwood C.R."/>
            <person name="Henaut A."/>
            <person name="Hilbert H."/>
            <person name="Holsappel S."/>
            <person name="Hosono S."/>
            <person name="Hullo M.-F."/>
            <person name="Itaya M."/>
            <person name="Jones L.-M."/>
            <person name="Joris B."/>
            <person name="Karamata D."/>
            <person name="Kasahara Y."/>
            <person name="Klaerr-Blanchard M."/>
            <person name="Klein C."/>
            <person name="Kobayashi Y."/>
            <person name="Koetter P."/>
            <person name="Koningstein G."/>
            <person name="Krogh S."/>
            <person name="Kumano M."/>
            <person name="Kurita K."/>
            <person name="Lapidus A."/>
            <person name="Lardinois S."/>
            <person name="Lauber J."/>
            <person name="Lazarevic V."/>
            <person name="Lee S.-M."/>
            <person name="Levine A."/>
            <person name="Liu H."/>
            <person name="Masuda S."/>
            <person name="Mauel C."/>
            <person name="Medigue C."/>
            <person name="Medina N."/>
            <person name="Mellado R.P."/>
            <person name="Mizuno M."/>
            <person name="Moestl D."/>
            <person name="Nakai S."/>
            <person name="Noback M."/>
            <person name="Noone D."/>
            <person name="O'Reilly M."/>
            <person name="Ogawa K."/>
            <person name="Ogiwara A."/>
            <person name="Oudega B."/>
            <person name="Park S.-H."/>
            <person name="Parro V."/>
            <person name="Pohl T.M."/>
            <person name="Portetelle D."/>
            <person name="Porwollik S."/>
            <person name="Prescott A.M."/>
            <person name="Presecan E."/>
            <person name="Pujic P."/>
            <person name="Purnelle B."/>
            <person name="Rapoport G."/>
            <person name="Rey M."/>
            <person name="Reynolds S."/>
            <person name="Rieger M."/>
            <person name="Rivolta C."/>
            <person name="Rocha E."/>
            <person name="Roche B."/>
            <person name="Rose M."/>
            <person name="Sadaie Y."/>
            <person name="Sato T."/>
            <person name="Scanlan E."/>
            <person name="Schleich S."/>
            <person name="Schroeter R."/>
            <person name="Scoffone F."/>
            <person name="Sekiguchi J."/>
            <person name="Sekowska A."/>
            <person name="Seror S.J."/>
            <person name="Serror P."/>
            <person name="Shin B.-S."/>
            <person name="Soldo B."/>
            <person name="Sorokin A."/>
            <person name="Tacconi E."/>
            <person name="Takagi T."/>
            <person name="Takahashi H."/>
            <person name="Takemaru K."/>
            <person name="Takeuchi M."/>
            <person name="Tamakoshi A."/>
            <person name="Tanaka T."/>
            <person name="Terpstra P."/>
            <person name="Tognoni A."/>
            <person name="Tosato V."/>
            <person name="Uchiyama S."/>
            <person name="Vandenbol M."/>
            <person name="Vannier F."/>
            <person name="Vassarotti A."/>
            <person name="Viari A."/>
            <person name="Wambutt R."/>
            <person name="Wedler E."/>
            <person name="Wedler H."/>
            <person name="Weitzenegger T."/>
            <person name="Winters P."/>
            <person name="Wipat A."/>
            <person name="Yamamoto H."/>
            <person name="Yamane K."/>
            <person name="Yasumoto K."/>
            <person name="Yata K."/>
            <person name="Yoshida K."/>
            <person name="Yoshikawa H.-F."/>
            <person name="Zumstein E."/>
            <person name="Yoshikawa H."/>
            <person name="Danchin A."/>
        </authorList>
    </citation>
    <scope>NUCLEOTIDE SEQUENCE [LARGE SCALE GENOMIC DNA]</scope>
    <source>
        <strain>168</strain>
    </source>
</reference>
<reference key="3">
    <citation type="journal article" date="2009" name="Microbiology">
        <title>From a consortium sequence to a unified sequence: the Bacillus subtilis 168 reference genome a decade later.</title>
        <authorList>
            <person name="Barbe V."/>
            <person name="Cruveiller S."/>
            <person name="Kunst F."/>
            <person name="Lenoble P."/>
            <person name="Meurice G."/>
            <person name="Sekowska A."/>
            <person name="Vallenet D."/>
            <person name="Wang T."/>
            <person name="Moszer I."/>
            <person name="Medigue C."/>
            <person name="Danchin A."/>
        </authorList>
    </citation>
    <scope>SEQUENCE REVISION TO 79</scope>
</reference>
<reference key="4">
    <citation type="journal article" date="2002" name="Mol. Microbiol.">
        <title>Microarray analysis of the Bacillus subtilis K-state: genome-wide expression changes dependent on ComK.</title>
        <authorList>
            <person name="Berka R.M."/>
            <person name="Hahn J."/>
            <person name="Albano M."/>
            <person name="Draskovic I."/>
            <person name="Persuh M."/>
            <person name="Cui X."/>
            <person name="Sloma A."/>
            <person name="Widner W."/>
            <person name="Dubnau D."/>
        </authorList>
    </citation>
    <scope>DEVELOPMENTAL STAGE</scope>
    <scope>INDUCTION</scope>
    <scope>DISRUPTION PHENOTYPE</scope>
    <source>
        <strain>168</strain>
    </source>
</reference>
<reference key="5">
    <citation type="journal article" date="2002" name="J. Bacteriol.">
        <title>Whole-genome analysis of genes regulated by the Bacillus subtilis competence transcription factor ComK.</title>
        <authorList>
            <person name="Ogura M."/>
            <person name="Yamaguchi H."/>
            <person name="Kobayashi K."/>
            <person name="Ogasawara N."/>
            <person name="Fujita Y."/>
            <person name="Tanaka T."/>
        </authorList>
    </citation>
    <scope>INDUCTION</scope>
    <scope>DISRUPTION PHENOTYPE</scope>
    <source>
        <strain>168 / CU741</strain>
    </source>
</reference>
<reference key="6">
    <citation type="journal article" date="2004" name="J. Bacteriol.">
        <title>Differential expression of two paralogous genes of Bacillus subtilis encoding single-stranded DNA binding protein.</title>
        <authorList>
            <person name="Lindner C."/>
            <person name="Nijland R."/>
            <person name="van Hartskamp M."/>
            <person name="Bron S."/>
            <person name="Hamoen L.W."/>
            <person name="Kuipers O.P."/>
        </authorList>
    </citation>
    <scope>FUNCTION</scope>
    <scope>INDUCTION</scope>
    <scope>DISRUPTION PHENOTYPE</scope>
    <source>
        <strain>168</strain>
    </source>
</reference>
<reference key="7">
    <citation type="journal article" date="2005" name="Cell">
        <title>Transformation proteins and DNA uptake localize to the cell poles in Bacillus subtilis.</title>
        <authorList>
            <person name="Hahn J."/>
            <person name="Maier B."/>
            <person name="Haijema B.J."/>
            <person name="Sheetz M."/>
            <person name="Dubnau D."/>
        </authorList>
    </citation>
    <scope>SUBCELLULAR LOCATION</scope>
    <scope>DEVELOPMENTAL STAGE</scope>
    <source>
        <strain>168</strain>
    </source>
</reference>
<reference key="8">
    <citation type="journal article" date="2006" name="Nucleic Acids Res.">
        <title>Bacterial single-stranded DNA-binding proteins are phosphorylated on tyrosine.</title>
        <authorList>
            <person name="Mijakovic I."/>
            <person name="Petranovic D."/>
            <person name="Macek B."/>
            <person name="Cepo T."/>
            <person name="Mann M."/>
            <person name="Davies J."/>
            <person name="Jensen P.R."/>
            <person name="Vujaklija D."/>
        </authorList>
    </citation>
    <scope>PHOSPHORYLATION BY YWQD</scope>
    <scope>SUBUNIT</scope>
    <source>
        <strain>168</strain>
    </source>
</reference>
<reference key="9">
    <citation type="journal article" date="2007" name="Mol. Microbiol.">
        <title>Multiple interactions among the competence proteins of Bacillus subtilis.</title>
        <authorList>
            <person name="Kramer N."/>
            <person name="Hahn J."/>
            <person name="Dubnau D."/>
        </authorList>
    </citation>
    <scope>SUBCELLULAR LOCATION</scope>
    <scope>DEVELOPMENTAL STAGE</scope>
    <scope>DISRUPTION PHENOTYPE</scope>
    <source>
        <strain>168</strain>
    </source>
</reference>
<reference key="10">
    <citation type="journal article" date="2014" name="J. Biol. Chem.">
        <title>Roles of Bacillus subtilis DprA and SsbA in RecA-mediated genetic recombination.</title>
        <authorList>
            <person name="Yadav T."/>
            <person name="Carrasco B."/>
            <person name="Serrano E."/>
            <person name="Alonso J.C."/>
        </authorList>
    </citation>
    <scope>FUNCTION</scope>
</reference>
<protein>
    <recommendedName>
        <fullName evidence="2">Single-stranded DNA-binding protein B</fullName>
        <shortName evidence="2">SSB B</shortName>
    </recommendedName>
</protein>